<name>ATPL_BACHK</name>
<evidence type="ECO:0000255" key="1">
    <source>
        <dbReference type="HAMAP-Rule" id="MF_01396"/>
    </source>
</evidence>
<organism>
    <name type="scientific">Bacillus thuringiensis subsp. konkukian (strain 97-27)</name>
    <dbReference type="NCBI Taxonomy" id="281309"/>
    <lineage>
        <taxon>Bacteria</taxon>
        <taxon>Bacillati</taxon>
        <taxon>Bacillota</taxon>
        <taxon>Bacilli</taxon>
        <taxon>Bacillales</taxon>
        <taxon>Bacillaceae</taxon>
        <taxon>Bacillus</taxon>
        <taxon>Bacillus cereus group</taxon>
    </lineage>
</organism>
<proteinExistence type="inferred from homology"/>
<feature type="chain" id="PRO_0000365850" description="ATP synthase subunit c">
    <location>
        <begin position="1"/>
        <end position="72"/>
    </location>
</feature>
<feature type="transmembrane region" description="Helical" evidence="1">
    <location>
        <begin position="1"/>
        <end position="21"/>
    </location>
</feature>
<feature type="transmembrane region" description="Helical" evidence="1">
    <location>
        <begin position="49"/>
        <end position="69"/>
    </location>
</feature>
<feature type="site" description="Reversibly protonated during proton transport" evidence="1">
    <location>
        <position position="56"/>
    </location>
</feature>
<keyword id="KW-0066">ATP synthesis</keyword>
<keyword id="KW-1003">Cell membrane</keyword>
<keyword id="KW-0138">CF(0)</keyword>
<keyword id="KW-0375">Hydrogen ion transport</keyword>
<keyword id="KW-0406">Ion transport</keyword>
<keyword id="KW-0446">Lipid-binding</keyword>
<keyword id="KW-0472">Membrane</keyword>
<keyword id="KW-0812">Transmembrane</keyword>
<keyword id="KW-1133">Transmembrane helix</keyword>
<keyword id="KW-0813">Transport</keyword>
<comment type="function">
    <text evidence="1">F(1)F(0) ATP synthase produces ATP from ADP in the presence of a proton or sodium gradient. F-type ATPases consist of two structural domains, F(1) containing the extramembraneous catalytic core and F(0) containing the membrane proton channel, linked together by a central stalk and a peripheral stalk. During catalysis, ATP synthesis in the catalytic domain of F(1) is coupled via a rotary mechanism of the central stalk subunits to proton translocation.</text>
</comment>
<comment type="function">
    <text evidence="1">Key component of the F(0) channel; it plays a direct role in translocation across the membrane. A homomeric c-ring of between 10-14 subunits forms the central stalk rotor element with the F(1) delta and epsilon subunits.</text>
</comment>
<comment type="subunit">
    <text evidence="1">F-type ATPases have 2 components, F(1) - the catalytic core - and F(0) - the membrane proton channel. F(1) has five subunits: alpha(3), beta(3), gamma(1), delta(1), epsilon(1). F(0) has three main subunits: a(1), b(2) and c(10-14). The alpha and beta chains form an alternating ring which encloses part of the gamma chain. F(1) is attached to F(0) by a central stalk formed by the gamma and epsilon chains, while a peripheral stalk is formed by the delta and b chains.</text>
</comment>
<comment type="subcellular location">
    <subcellularLocation>
        <location evidence="1">Cell membrane</location>
        <topology evidence="1">Multi-pass membrane protein</topology>
    </subcellularLocation>
</comment>
<comment type="similarity">
    <text evidence="1">Belongs to the ATPase C chain family.</text>
</comment>
<reference key="1">
    <citation type="journal article" date="2006" name="J. Bacteriol.">
        <title>Pathogenomic sequence analysis of Bacillus cereus and Bacillus thuringiensis isolates closely related to Bacillus anthracis.</title>
        <authorList>
            <person name="Han C.S."/>
            <person name="Xie G."/>
            <person name="Challacombe J.F."/>
            <person name="Altherr M.R."/>
            <person name="Bhotika S.S."/>
            <person name="Bruce D."/>
            <person name="Campbell C.S."/>
            <person name="Campbell M.L."/>
            <person name="Chen J."/>
            <person name="Chertkov O."/>
            <person name="Cleland C."/>
            <person name="Dimitrijevic M."/>
            <person name="Doggett N.A."/>
            <person name="Fawcett J.J."/>
            <person name="Glavina T."/>
            <person name="Goodwin L.A."/>
            <person name="Hill K.K."/>
            <person name="Hitchcock P."/>
            <person name="Jackson P.J."/>
            <person name="Keim P."/>
            <person name="Kewalramani A.R."/>
            <person name="Longmire J."/>
            <person name="Lucas S."/>
            <person name="Malfatti S."/>
            <person name="McMurry K."/>
            <person name="Meincke L.J."/>
            <person name="Misra M."/>
            <person name="Moseman B.L."/>
            <person name="Mundt M."/>
            <person name="Munk A.C."/>
            <person name="Okinaka R.T."/>
            <person name="Parson-Quintana B."/>
            <person name="Reilly L.P."/>
            <person name="Richardson P."/>
            <person name="Robinson D.L."/>
            <person name="Rubin E."/>
            <person name="Saunders E."/>
            <person name="Tapia R."/>
            <person name="Tesmer J.G."/>
            <person name="Thayer N."/>
            <person name="Thompson L.S."/>
            <person name="Tice H."/>
            <person name="Ticknor L.O."/>
            <person name="Wills P.L."/>
            <person name="Brettin T.S."/>
            <person name="Gilna P."/>
        </authorList>
    </citation>
    <scope>NUCLEOTIDE SEQUENCE [LARGE SCALE GENOMIC DNA]</scope>
    <source>
        <strain>97-27</strain>
    </source>
</reference>
<sequence length="72" mass="7213">MSLGVIAAAIAIGLSALGAGIGNGLIVSRTIEGVARQPELKGALQTIMFIGVALVEALPIIGVVIAFIVMNK</sequence>
<accession>Q6HAX4</accession>
<dbReference type="EMBL" id="AE017355">
    <property type="protein sequence ID" value="AAT63854.1"/>
    <property type="molecule type" value="Genomic_DNA"/>
</dbReference>
<dbReference type="RefSeq" id="WP_000052064.1">
    <property type="nucleotide sequence ID" value="NC_005957.1"/>
</dbReference>
<dbReference type="RefSeq" id="YP_039302.1">
    <property type="nucleotide sequence ID" value="NC_005957.1"/>
</dbReference>
<dbReference type="SMR" id="Q6HAX4"/>
<dbReference type="GeneID" id="93005813"/>
<dbReference type="KEGG" id="btk:BT9727_4993"/>
<dbReference type="PATRIC" id="fig|281309.8.peg.5310"/>
<dbReference type="HOGENOM" id="CLU_148047_1_1_9"/>
<dbReference type="PRO" id="PR:Q6HAX4"/>
<dbReference type="Proteomes" id="UP000001301">
    <property type="component" value="Chromosome"/>
</dbReference>
<dbReference type="GO" id="GO:0005886">
    <property type="term" value="C:plasma membrane"/>
    <property type="evidence" value="ECO:0007669"/>
    <property type="project" value="UniProtKB-SubCell"/>
</dbReference>
<dbReference type="GO" id="GO:0045259">
    <property type="term" value="C:proton-transporting ATP synthase complex"/>
    <property type="evidence" value="ECO:0007669"/>
    <property type="project" value="UniProtKB-KW"/>
</dbReference>
<dbReference type="GO" id="GO:0033177">
    <property type="term" value="C:proton-transporting two-sector ATPase complex, proton-transporting domain"/>
    <property type="evidence" value="ECO:0007669"/>
    <property type="project" value="InterPro"/>
</dbReference>
<dbReference type="GO" id="GO:0008289">
    <property type="term" value="F:lipid binding"/>
    <property type="evidence" value="ECO:0007669"/>
    <property type="project" value="UniProtKB-KW"/>
</dbReference>
<dbReference type="GO" id="GO:0046933">
    <property type="term" value="F:proton-transporting ATP synthase activity, rotational mechanism"/>
    <property type="evidence" value="ECO:0007669"/>
    <property type="project" value="UniProtKB-UniRule"/>
</dbReference>
<dbReference type="CDD" id="cd18185">
    <property type="entry name" value="ATP-synt_Fo_c_ATPE"/>
    <property type="match status" value="1"/>
</dbReference>
<dbReference type="FunFam" id="1.20.20.10:FF:000004">
    <property type="entry name" value="ATP synthase subunit c"/>
    <property type="match status" value="1"/>
</dbReference>
<dbReference type="Gene3D" id="1.20.20.10">
    <property type="entry name" value="F1F0 ATP synthase subunit C"/>
    <property type="match status" value="1"/>
</dbReference>
<dbReference type="HAMAP" id="MF_01396">
    <property type="entry name" value="ATP_synth_c_bact"/>
    <property type="match status" value="1"/>
</dbReference>
<dbReference type="InterPro" id="IPR005953">
    <property type="entry name" value="ATP_synth_csu_bac/chlpt"/>
</dbReference>
<dbReference type="InterPro" id="IPR000454">
    <property type="entry name" value="ATP_synth_F0_csu"/>
</dbReference>
<dbReference type="InterPro" id="IPR020537">
    <property type="entry name" value="ATP_synth_F0_csu_DDCD_BS"/>
</dbReference>
<dbReference type="InterPro" id="IPR038662">
    <property type="entry name" value="ATP_synth_F0_csu_sf"/>
</dbReference>
<dbReference type="InterPro" id="IPR002379">
    <property type="entry name" value="ATPase_proteolipid_c-like_dom"/>
</dbReference>
<dbReference type="InterPro" id="IPR035921">
    <property type="entry name" value="F/V-ATP_Csub_sf"/>
</dbReference>
<dbReference type="NCBIfam" id="TIGR01260">
    <property type="entry name" value="ATP_synt_c"/>
    <property type="match status" value="1"/>
</dbReference>
<dbReference type="NCBIfam" id="NF005363">
    <property type="entry name" value="PRK06876.1"/>
    <property type="match status" value="1"/>
</dbReference>
<dbReference type="PANTHER" id="PTHR10031">
    <property type="entry name" value="ATP SYNTHASE LIPID-BINDING PROTEIN, MITOCHONDRIAL"/>
    <property type="match status" value="1"/>
</dbReference>
<dbReference type="PANTHER" id="PTHR10031:SF0">
    <property type="entry name" value="ATPASE PROTEIN 9"/>
    <property type="match status" value="1"/>
</dbReference>
<dbReference type="Pfam" id="PF00137">
    <property type="entry name" value="ATP-synt_C"/>
    <property type="match status" value="1"/>
</dbReference>
<dbReference type="PRINTS" id="PR00124">
    <property type="entry name" value="ATPASEC"/>
</dbReference>
<dbReference type="SUPFAM" id="SSF81333">
    <property type="entry name" value="F1F0 ATP synthase subunit C"/>
    <property type="match status" value="1"/>
</dbReference>
<dbReference type="PROSITE" id="PS00605">
    <property type="entry name" value="ATPASE_C"/>
    <property type="match status" value="1"/>
</dbReference>
<gene>
    <name evidence="1" type="primary">atpE</name>
    <name type="ordered locus">BT9727_4993</name>
</gene>
<protein>
    <recommendedName>
        <fullName evidence="1">ATP synthase subunit c</fullName>
    </recommendedName>
    <alternativeName>
        <fullName evidence="1">ATP synthase F(0) sector subunit c</fullName>
    </alternativeName>
    <alternativeName>
        <fullName evidence="1">F-type ATPase subunit c</fullName>
        <shortName evidence="1">F-ATPase subunit c</shortName>
    </alternativeName>
    <alternativeName>
        <fullName evidence="1">Lipid-binding protein</fullName>
    </alternativeName>
</protein>